<keyword id="KW-1185">Reference proteome</keyword>
<accession>Q3SG76</accession>
<feature type="chain" id="PRO_0000227085" description="Protein SlyX homolog">
    <location>
        <begin position="1"/>
        <end position="67"/>
    </location>
</feature>
<name>SLYX_THIDA</name>
<dbReference type="EMBL" id="CP000116">
    <property type="protein sequence ID" value="AAZ98380.1"/>
    <property type="molecule type" value="Genomic_DNA"/>
</dbReference>
<dbReference type="RefSeq" id="WP_011312939.1">
    <property type="nucleotide sequence ID" value="NC_007404.1"/>
</dbReference>
<dbReference type="SMR" id="Q3SG76"/>
<dbReference type="STRING" id="292415.Tbd_2427"/>
<dbReference type="KEGG" id="tbd:Tbd_2427"/>
<dbReference type="eggNOG" id="COG2900">
    <property type="taxonomic scope" value="Bacteria"/>
</dbReference>
<dbReference type="HOGENOM" id="CLU_180796_3_1_4"/>
<dbReference type="Proteomes" id="UP000008291">
    <property type="component" value="Chromosome"/>
</dbReference>
<dbReference type="Gene3D" id="1.20.5.300">
    <property type="match status" value="1"/>
</dbReference>
<dbReference type="HAMAP" id="MF_00715">
    <property type="entry name" value="SlyX"/>
    <property type="match status" value="1"/>
</dbReference>
<dbReference type="InterPro" id="IPR007236">
    <property type="entry name" value="SlyX"/>
</dbReference>
<dbReference type="PANTHER" id="PTHR36508">
    <property type="entry name" value="PROTEIN SLYX"/>
    <property type="match status" value="1"/>
</dbReference>
<dbReference type="PANTHER" id="PTHR36508:SF1">
    <property type="entry name" value="PROTEIN SLYX"/>
    <property type="match status" value="1"/>
</dbReference>
<dbReference type="Pfam" id="PF04102">
    <property type="entry name" value="SlyX"/>
    <property type="match status" value="1"/>
</dbReference>
<evidence type="ECO:0000255" key="1">
    <source>
        <dbReference type="HAMAP-Rule" id="MF_00715"/>
    </source>
</evidence>
<organism>
    <name type="scientific">Thiobacillus denitrificans (strain ATCC 25259 / T1)</name>
    <dbReference type="NCBI Taxonomy" id="292415"/>
    <lineage>
        <taxon>Bacteria</taxon>
        <taxon>Pseudomonadati</taxon>
        <taxon>Pseudomonadota</taxon>
        <taxon>Betaproteobacteria</taxon>
        <taxon>Nitrosomonadales</taxon>
        <taxon>Thiobacillaceae</taxon>
        <taxon>Thiobacillus</taxon>
    </lineage>
</organism>
<gene>
    <name evidence="1" type="primary">slyX</name>
    <name type="ordered locus">Tbd_2427</name>
</gene>
<reference key="1">
    <citation type="journal article" date="2006" name="J. Bacteriol.">
        <title>The genome sequence of the obligately chemolithoautotrophic, facultatively anaerobic bacterium Thiobacillus denitrificans.</title>
        <authorList>
            <person name="Beller H.R."/>
            <person name="Chain P.S."/>
            <person name="Letain T.E."/>
            <person name="Chakicherla A."/>
            <person name="Larimer F.W."/>
            <person name="Richardson P.M."/>
            <person name="Coleman M.A."/>
            <person name="Wood A.P."/>
            <person name="Kelly D.P."/>
        </authorList>
    </citation>
    <scope>NUCLEOTIDE SEQUENCE [LARGE SCALE GENOMIC DNA]</scope>
    <source>
        <strain>ATCC 25259 / T1</strain>
    </source>
</reference>
<comment type="similarity">
    <text evidence="1">Belongs to the SlyX family.</text>
</comment>
<sequence length="67" mass="7716">MSDARITELETKLIFAEDLIETLNQTVIRQQAQLDQIQQQLRLLHRQLQDALAREAPAPGNEPPPHY</sequence>
<proteinExistence type="inferred from homology"/>
<protein>
    <recommendedName>
        <fullName evidence="1">Protein SlyX homolog</fullName>
    </recommendedName>
</protein>